<organism>
    <name type="scientific">Burkholderia cepacia</name>
    <name type="common">Pseudomonas cepacia</name>
    <dbReference type="NCBI Taxonomy" id="292"/>
    <lineage>
        <taxon>Bacteria</taxon>
        <taxon>Pseudomonadati</taxon>
        <taxon>Pseudomonadota</taxon>
        <taxon>Betaproteobacteria</taxon>
        <taxon>Burkholderiales</taxon>
        <taxon>Burkholderiaceae</taxon>
        <taxon>Burkholderia</taxon>
        <taxon>Burkholderia cepacia complex</taxon>
    </lineage>
</organism>
<keyword id="KW-0001">2Fe-2S</keyword>
<keyword id="KW-0058">Aromatic hydrocarbons catabolism</keyword>
<keyword id="KW-0223">Dioxygenase</keyword>
<keyword id="KW-0903">Direct protein sequencing</keyword>
<keyword id="KW-0408">Iron</keyword>
<keyword id="KW-0411">Iron-sulfur</keyword>
<keyword id="KW-0479">Metal-binding</keyword>
<keyword id="KW-0520">NAD</keyword>
<keyword id="KW-0560">Oxidoreductase</keyword>
<keyword id="KW-0614">Plasmid</keyword>
<feature type="initiator methionine" description="Removed" evidence="3">
    <location>
        <position position="1"/>
    </location>
</feature>
<feature type="chain" id="PRO_0000085051" description="2-halobenzoate 1,2-dioxygenase large subunit">
    <location>
        <begin position="2"/>
        <end position="465"/>
    </location>
</feature>
<feature type="domain" description="Rieske" evidence="2">
    <location>
        <begin position="56"/>
        <end position="154"/>
    </location>
</feature>
<feature type="binding site" evidence="2">
    <location>
        <position position="98"/>
    </location>
    <ligand>
        <name>[2Fe-2S] cluster</name>
        <dbReference type="ChEBI" id="CHEBI:190135"/>
    </ligand>
</feature>
<feature type="binding site" evidence="2">
    <location>
        <position position="100"/>
    </location>
    <ligand>
        <name>[2Fe-2S] cluster</name>
        <dbReference type="ChEBI" id="CHEBI:190135"/>
    </ligand>
</feature>
<feature type="binding site" evidence="2">
    <location>
        <position position="118"/>
    </location>
    <ligand>
        <name>[2Fe-2S] cluster</name>
        <dbReference type="ChEBI" id="CHEBI:190135"/>
    </ligand>
</feature>
<feature type="binding site" evidence="2">
    <location>
        <position position="121"/>
    </location>
    <ligand>
        <name>[2Fe-2S] cluster</name>
        <dbReference type="ChEBI" id="CHEBI:190135"/>
    </ligand>
</feature>
<feature type="binding site" evidence="1">
    <location>
        <position position="227"/>
    </location>
    <ligand>
        <name>Fe cation</name>
        <dbReference type="ChEBI" id="CHEBI:24875"/>
    </ligand>
</feature>
<feature type="binding site" evidence="1">
    <location>
        <position position="232"/>
    </location>
    <ligand>
        <name>Fe cation</name>
        <dbReference type="ChEBI" id="CHEBI:24875"/>
    </ligand>
</feature>
<accession>Q51601</accession>
<gene>
    <name type="primary">cbdA</name>
</gene>
<comment type="function">
    <text>Component of 2-halobenzoate dioxygenase multicomponent enzyme system which catalyzes the incorporation of both atoms of molecular oxygen into 2-halobenzoate to form catechol.</text>
</comment>
<comment type="catalytic activity">
    <reaction>
        <text>a 2-halobenzoate + NADH + O2 + H(+) = a halide anion + catechol + CO2 + NAD(+)</text>
        <dbReference type="Rhea" id="RHEA:53736"/>
        <dbReference type="ChEBI" id="CHEBI:15378"/>
        <dbReference type="ChEBI" id="CHEBI:15379"/>
        <dbReference type="ChEBI" id="CHEBI:16042"/>
        <dbReference type="ChEBI" id="CHEBI:16526"/>
        <dbReference type="ChEBI" id="CHEBI:18135"/>
        <dbReference type="ChEBI" id="CHEBI:57540"/>
        <dbReference type="ChEBI" id="CHEBI:57945"/>
        <dbReference type="ChEBI" id="CHEBI:70856"/>
        <dbReference type="EC" id="1.14.12.13"/>
    </reaction>
</comment>
<comment type="cofactor">
    <cofactor evidence="2">
        <name>[2Fe-2S] cluster</name>
        <dbReference type="ChEBI" id="CHEBI:190135"/>
    </cofactor>
    <text evidence="2">Binds 1 [2Fe-2S] cluster per subunit.</text>
</comment>
<comment type="cofactor">
    <cofactor evidence="1">
        <name>Fe(2+)</name>
        <dbReference type="ChEBI" id="CHEBI:29033"/>
    </cofactor>
    <text evidence="1">Binds 1 Fe(2+) ion per subunit.</text>
</comment>
<comment type="pathway">
    <text>Xenobiotic degradation; benzoate degradation via CoA ligation.</text>
</comment>
<comment type="subunit">
    <text>Heterohexamer of 3 large (CbdA) subunits and 3 small (CbdB) subunits. The heterohexamer is part of 2-halobenzoate dioxygenase two component enzyme system. The other component is a NADH:acceptor reductase (CdbC).</text>
</comment>
<comment type="similarity">
    <text evidence="4">Belongs to the bacterial ring-hydroxylating dioxygenase alpha subunit family.</text>
</comment>
<sequence length="465" mass="52478">MSTPLIAGTGPSAVRQLISNAVQNDPVSGNFRCRRDIFTDAALFDYEMKYIFEQNWVFLAHESQVANPDDYLVSNIGRQPVIITRNKAGDVSAVINACSHRGAELCRRKQGNRSTFTCQFHGWTFSNTGKLLKVKDGQDDNYPEGFNVDGSHDLTRIPSFANYRGFLFGSMNPDACPIEEHLGGSKAILDQVIDQTPGELEVLRGSSSYIYDGNWKLQIENGADGYHVGSVHWNYVATIGRRDRTSDTIRTVDVTTWSKKNIGGTYTFEHGHMLLWTRLPNPEVRPVFARREELKARVGEEVADAIVNQTRNLCIYPNLYVMDQISTQIRVVRPISVDKTEVTIYCFAPRDESEEVRNARIRQYEDFFNVSGMGTPDDLEEFRACQSGYRGSAREWNDLSRGAPHWISGPDDNARRLGLAPLMSGARMEDEGLFVQQHTYWAETMLRGIEAEPKVFNVQPVEVAQ</sequence>
<name>CBDA_BURCE</name>
<dbReference type="EC" id="1.14.12.13"/>
<dbReference type="EMBL" id="X79076">
    <property type="protein sequence ID" value="CAA55681.1"/>
    <property type="molecule type" value="Genomic_DNA"/>
</dbReference>
<dbReference type="SMR" id="Q51601"/>
<dbReference type="KEGG" id="ag:CAA55681"/>
<dbReference type="BioCyc" id="MetaCyc:MONOMER-14763"/>
<dbReference type="UniPathway" id="UPA00233"/>
<dbReference type="GO" id="GO:0051537">
    <property type="term" value="F:2 iron, 2 sulfur cluster binding"/>
    <property type="evidence" value="ECO:0007669"/>
    <property type="project" value="UniProtKB-KW"/>
</dbReference>
<dbReference type="GO" id="GO:0018626">
    <property type="term" value="F:2-chlorobenzoate 1,2-dioxygenase activity"/>
    <property type="evidence" value="ECO:0007669"/>
    <property type="project" value="UniProtKB-EC"/>
</dbReference>
<dbReference type="GO" id="GO:0005506">
    <property type="term" value="F:iron ion binding"/>
    <property type="evidence" value="ECO:0007669"/>
    <property type="project" value="InterPro"/>
</dbReference>
<dbReference type="GO" id="GO:0010128">
    <property type="term" value="P:benzoate catabolic process via CoA ligation"/>
    <property type="evidence" value="ECO:0007669"/>
    <property type="project" value="UniProtKB-UniPathway"/>
</dbReference>
<dbReference type="CDD" id="cd08879">
    <property type="entry name" value="RHO_alpha_C_AntDO-like"/>
    <property type="match status" value="1"/>
</dbReference>
<dbReference type="Gene3D" id="3.90.380.10">
    <property type="entry name" value="Naphthalene 1,2-dioxygenase Alpha Subunit, Chain A, domain 1"/>
    <property type="match status" value="1"/>
</dbReference>
<dbReference type="Gene3D" id="2.102.10.10">
    <property type="entry name" value="Rieske [2Fe-2S] iron-sulphur domain"/>
    <property type="match status" value="1"/>
</dbReference>
<dbReference type="InterPro" id="IPR017941">
    <property type="entry name" value="Rieske_2Fe-2S"/>
</dbReference>
<dbReference type="InterPro" id="IPR036922">
    <property type="entry name" value="Rieske_2Fe-2S_sf"/>
</dbReference>
<dbReference type="InterPro" id="IPR015881">
    <property type="entry name" value="Ring-hydroxy_dOase_2Fe2S_BS"/>
</dbReference>
<dbReference type="InterPro" id="IPR015879">
    <property type="entry name" value="Ring_hydroxy_dOase_asu_C_dom"/>
</dbReference>
<dbReference type="InterPro" id="IPR001663">
    <property type="entry name" value="Rng_hydr_dOase-A"/>
</dbReference>
<dbReference type="PANTHER" id="PTHR43756:SF1">
    <property type="entry name" value="3-PHENYLPROPIONATE_CINNAMIC ACID DIOXYGENASE SUBUNIT ALPHA"/>
    <property type="match status" value="1"/>
</dbReference>
<dbReference type="PANTHER" id="PTHR43756">
    <property type="entry name" value="CHOLINE MONOOXYGENASE, CHLOROPLASTIC"/>
    <property type="match status" value="1"/>
</dbReference>
<dbReference type="Pfam" id="PF00355">
    <property type="entry name" value="Rieske"/>
    <property type="match status" value="1"/>
</dbReference>
<dbReference type="Pfam" id="PF00848">
    <property type="entry name" value="Ring_hydroxyl_A"/>
    <property type="match status" value="1"/>
</dbReference>
<dbReference type="PRINTS" id="PR00090">
    <property type="entry name" value="RNGDIOXGNASE"/>
</dbReference>
<dbReference type="SUPFAM" id="SSF55961">
    <property type="entry name" value="Bet v1-like"/>
    <property type="match status" value="1"/>
</dbReference>
<dbReference type="SUPFAM" id="SSF50022">
    <property type="entry name" value="ISP domain"/>
    <property type="match status" value="1"/>
</dbReference>
<dbReference type="PROSITE" id="PS51296">
    <property type="entry name" value="RIESKE"/>
    <property type="match status" value="1"/>
</dbReference>
<dbReference type="PROSITE" id="PS00570">
    <property type="entry name" value="RING_HYDROXYL_ALPHA"/>
    <property type="match status" value="1"/>
</dbReference>
<reference key="1">
    <citation type="journal article" date="1995" name="J. Bacteriol.">
        <title>Cloning, nucleotide sequence, and expression of the plasmid-encoded genes for the two-component 2-halobenzoate 1,2-dioxygenase from Pseudomonas cepacia 2CBS.</title>
        <authorList>
            <person name="Haak B."/>
            <person name="Fetzner S."/>
            <person name="Lingens F."/>
        </authorList>
    </citation>
    <scope>NUCLEOTIDE SEQUENCE [GENOMIC DNA]</scope>
    <source>
        <strain>2CBS</strain>
    </source>
</reference>
<reference key="2">
    <citation type="journal article" date="1992" name="J. Bacteriol.">
        <title>Purification and some properties of 2-halobenzoate 1,2-dioxygenase, a two-component enzyme system from Pseudomonas cepacia 2CBS.</title>
        <authorList>
            <person name="Fetzner S."/>
            <person name="Mueller R."/>
            <person name="Lingens F."/>
        </authorList>
    </citation>
    <scope>PROTEIN SEQUENCE OF 2-21</scope>
    <scope>CHARACTERIZATION</scope>
    <source>
        <strain>2CBS</strain>
    </source>
</reference>
<protein>
    <recommendedName>
        <fullName>2-halobenzoate 1,2-dioxygenase large subunit</fullName>
        <ecNumber>1.14.12.13</ecNumber>
    </recommendedName>
    <alternativeName>
        <fullName>2-chlorobenzoate 1,2-dioxygenase</fullName>
    </alternativeName>
</protein>
<geneLocation type="plasmid">
    <name>pBAH1</name>
</geneLocation>
<proteinExistence type="evidence at protein level"/>
<evidence type="ECO:0000250" key="1"/>
<evidence type="ECO:0000255" key="2">
    <source>
        <dbReference type="PROSITE-ProRule" id="PRU00628"/>
    </source>
</evidence>
<evidence type="ECO:0000269" key="3">
    <source>
    </source>
</evidence>
<evidence type="ECO:0000305" key="4"/>